<accession>Q4FPE7</accession>
<organism>
    <name type="scientific">Pelagibacter ubique (strain HTCC1062)</name>
    <dbReference type="NCBI Taxonomy" id="335992"/>
    <lineage>
        <taxon>Bacteria</taxon>
        <taxon>Pseudomonadati</taxon>
        <taxon>Pseudomonadota</taxon>
        <taxon>Alphaproteobacteria</taxon>
        <taxon>Candidatus Pelagibacterales</taxon>
        <taxon>Candidatus Pelagibacteraceae</taxon>
        <taxon>Candidatus Pelagibacter</taxon>
    </lineage>
</organism>
<keyword id="KW-0066">ATP synthesis</keyword>
<keyword id="KW-0997">Cell inner membrane</keyword>
<keyword id="KW-1003">Cell membrane</keyword>
<keyword id="KW-0138">CF(0)</keyword>
<keyword id="KW-0375">Hydrogen ion transport</keyword>
<keyword id="KW-0406">Ion transport</keyword>
<keyword id="KW-0472">Membrane</keyword>
<keyword id="KW-1185">Reference proteome</keyword>
<keyword id="KW-0812">Transmembrane</keyword>
<keyword id="KW-1133">Transmembrane helix</keyword>
<keyword id="KW-0813">Transport</keyword>
<sequence>MEAFAAESGGMPQLNPEFWVSQIFWLIITFGILYVVLSKLILPKISANLENRKSQILENIEAAEKQREESEQKIEEYEKIVQSSKNEAKNYFKQAREKVLKDIGVKREILEKELDEEVNKAEIEIKTFRDNAPEKIKKIAVETSSDLLQELIGAEVNSSSISAIVEDLSRKKMDEYYGN</sequence>
<proteinExistence type="inferred from homology"/>
<name>ATPF_PELUB</name>
<feature type="chain" id="PRO_0000368647" description="ATP synthase subunit b">
    <location>
        <begin position="1"/>
        <end position="179"/>
    </location>
</feature>
<feature type="transmembrane region" description="Helical" evidence="1">
    <location>
        <begin position="23"/>
        <end position="43"/>
    </location>
</feature>
<gene>
    <name evidence="1" type="primary">atpF</name>
    <name type="ordered locus">SAR11_0118</name>
</gene>
<dbReference type="EMBL" id="CP000084">
    <property type="protein sequence ID" value="AAZ20942.1"/>
    <property type="molecule type" value="Genomic_DNA"/>
</dbReference>
<dbReference type="SMR" id="Q4FPE7"/>
<dbReference type="STRING" id="335992.SAR11_0118"/>
<dbReference type="KEGG" id="pub:SAR11_0118"/>
<dbReference type="eggNOG" id="COG0711">
    <property type="taxonomic scope" value="Bacteria"/>
</dbReference>
<dbReference type="HOGENOM" id="CLU_079215_1_2_5"/>
<dbReference type="OrthoDB" id="9805716at2"/>
<dbReference type="Proteomes" id="UP000002528">
    <property type="component" value="Chromosome"/>
</dbReference>
<dbReference type="GO" id="GO:0005886">
    <property type="term" value="C:plasma membrane"/>
    <property type="evidence" value="ECO:0007669"/>
    <property type="project" value="UniProtKB-SubCell"/>
</dbReference>
<dbReference type="GO" id="GO:0045259">
    <property type="term" value="C:proton-transporting ATP synthase complex"/>
    <property type="evidence" value="ECO:0007669"/>
    <property type="project" value="UniProtKB-KW"/>
</dbReference>
<dbReference type="GO" id="GO:0046933">
    <property type="term" value="F:proton-transporting ATP synthase activity, rotational mechanism"/>
    <property type="evidence" value="ECO:0007669"/>
    <property type="project" value="UniProtKB-UniRule"/>
</dbReference>
<dbReference type="GO" id="GO:0046961">
    <property type="term" value="F:proton-transporting ATPase activity, rotational mechanism"/>
    <property type="evidence" value="ECO:0007669"/>
    <property type="project" value="TreeGrafter"/>
</dbReference>
<dbReference type="CDD" id="cd06503">
    <property type="entry name" value="ATP-synt_Fo_b"/>
    <property type="match status" value="1"/>
</dbReference>
<dbReference type="HAMAP" id="MF_01398">
    <property type="entry name" value="ATP_synth_b_bprime"/>
    <property type="match status" value="1"/>
</dbReference>
<dbReference type="InterPro" id="IPR002146">
    <property type="entry name" value="ATP_synth_b/b'su_bac/chlpt"/>
</dbReference>
<dbReference type="InterPro" id="IPR050059">
    <property type="entry name" value="ATP_synthase_B_chain"/>
</dbReference>
<dbReference type="PANTHER" id="PTHR33445:SF1">
    <property type="entry name" value="ATP SYNTHASE SUBUNIT B"/>
    <property type="match status" value="1"/>
</dbReference>
<dbReference type="PANTHER" id="PTHR33445">
    <property type="entry name" value="ATP SYNTHASE SUBUNIT B', CHLOROPLASTIC"/>
    <property type="match status" value="1"/>
</dbReference>
<dbReference type="Pfam" id="PF00430">
    <property type="entry name" value="ATP-synt_B"/>
    <property type="match status" value="1"/>
</dbReference>
<comment type="function">
    <text evidence="1">F(1)F(0) ATP synthase produces ATP from ADP in the presence of a proton or sodium gradient. F-type ATPases consist of two structural domains, F(1) containing the extramembraneous catalytic core and F(0) containing the membrane proton channel, linked together by a central stalk and a peripheral stalk. During catalysis, ATP synthesis in the catalytic domain of F(1) is coupled via a rotary mechanism of the central stalk subunits to proton translocation.</text>
</comment>
<comment type="function">
    <text evidence="1">Component of the F(0) channel, it forms part of the peripheral stalk, linking F(1) to F(0).</text>
</comment>
<comment type="subunit">
    <text evidence="1">F-type ATPases have 2 components, F(1) - the catalytic core - and F(0) - the membrane proton channel. F(1) has five subunits: alpha(3), beta(3), gamma(1), delta(1), epsilon(1). F(0) has three main subunits: a(1), b(2) and c(10-14). The alpha and beta chains form an alternating ring which encloses part of the gamma chain. F(1) is attached to F(0) by a central stalk formed by the gamma and epsilon chains, while a peripheral stalk is formed by the delta and b chains.</text>
</comment>
<comment type="subcellular location">
    <subcellularLocation>
        <location evidence="1">Cell inner membrane</location>
        <topology evidence="1">Single-pass membrane protein</topology>
    </subcellularLocation>
</comment>
<comment type="similarity">
    <text evidence="1">Belongs to the ATPase B chain family.</text>
</comment>
<evidence type="ECO:0000255" key="1">
    <source>
        <dbReference type="HAMAP-Rule" id="MF_01398"/>
    </source>
</evidence>
<protein>
    <recommendedName>
        <fullName evidence="1">ATP synthase subunit b</fullName>
    </recommendedName>
    <alternativeName>
        <fullName evidence="1">ATP synthase F(0) sector subunit b</fullName>
    </alternativeName>
    <alternativeName>
        <fullName evidence="1">ATPase subunit I</fullName>
    </alternativeName>
    <alternativeName>
        <fullName evidence="1">F-type ATPase subunit b</fullName>
        <shortName evidence="1">F-ATPase subunit b</shortName>
    </alternativeName>
</protein>
<reference key="1">
    <citation type="journal article" date="2005" name="Science">
        <title>Genome streamlining in a cosmopolitan oceanic bacterium.</title>
        <authorList>
            <person name="Giovannoni S.J."/>
            <person name="Tripp H.J."/>
            <person name="Givan S."/>
            <person name="Podar M."/>
            <person name="Vergin K.L."/>
            <person name="Baptista D."/>
            <person name="Bibbs L."/>
            <person name="Eads J."/>
            <person name="Richardson T.H."/>
            <person name="Noordewier M."/>
            <person name="Rappe M.S."/>
            <person name="Short J.M."/>
            <person name="Carrington J.C."/>
            <person name="Mathur E.J."/>
        </authorList>
    </citation>
    <scope>NUCLEOTIDE SEQUENCE [LARGE SCALE GENOMIC DNA]</scope>
    <source>
        <strain>HTCC1062</strain>
    </source>
</reference>